<name>Y1386_HAEIN</name>
<organism>
    <name type="scientific">Haemophilus influenzae (strain ATCC 51907 / DSM 11121 / KW20 / Rd)</name>
    <dbReference type="NCBI Taxonomy" id="71421"/>
    <lineage>
        <taxon>Bacteria</taxon>
        <taxon>Pseudomonadati</taxon>
        <taxon>Pseudomonadota</taxon>
        <taxon>Gammaproteobacteria</taxon>
        <taxon>Pasteurellales</taxon>
        <taxon>Pasteurellaceae</taxon>
        <taxon>Haemophilus</taxon>
    </lineage>
</organism>
<feature type="chain" id="PRO_0000078034" description="Uncharacterized protein HI_1386">
    <location>
        <begin position="1"/>
        <end position="148"/>
    </location>
</feature>
<dbReference type="EMBL" id="L42023">
    <property type="protein sequence ID" value="AAC23042.1"/>
    <property type="molecule type" value="Genomic_DNA"/>
</dbReference>
<dbReference type="PIR" id="A64027">
    <property type="entry name" value="A64027"/>
</dbReference>
<dbReference type="RefSeq" id="NP_439538.1">
    <property type="nucleotide sequence ID" value="NC_000907.1"/>
</dbReference>
<dbReference type="STRING" id="71421.HI_1386"/>
<dbReference type="EnsemblBacteria" id="AAC23042">
    <property type="protein sequence ID" value="AAC23042"/>
    <property type="gene ID" value="HI_1386"/>
</dbReference>
<dbReference type="KEGG" id="hin:HI_1386"/>
<dbReference type="PATRIC" id="fig|71421.8.peg.1443"/>
<dbReference type="HOGENOM" id="CLU_1756257_0_0_6"/>
<dbReference type="OrthoDB" id="7210585at2"/>
<dbReference type="BioCyc" id="HINF71421:G1GJ1-1412-MONOMER"/>
<dbReference type="Proteomes" id="UP000000579">
    <property type="component" value="Chromosome"/>
</dbReference>
<sequence length="148" mass="17004">MYLLMAIFSGIKPNLYWNTKSDIFVDVKIEDIQQQLHFTFNEVNGHIDTNCYAVPREIAQKTSYSWNTSLIGDRSFLSALKSLGLIGQTSGKYTVKYRADFNKLIAVRRVFPQLSLSDEDNNNISAKILEVINQQNIEYYGGRPWAKE</sequence>
<reference key="1">
    <citation type="journal article" date="1995" name="Science">
        <title>Whole-genome random sequencing and assembly of Haemophilus influenzae Rd.</title>
        <authorList>
            <person name="Fleischmann R.D."/>
            <person name="Adams M.D."/>
            <person name="White O."/>
            <person name="Clayton R.A."/>
            <person name="Kirkness E.F."/>
            <person name="Kerlavage A.R."/>
            <person name="Bult C.J."/>
            <person name="Tomb J.-F."/>
            <person name="Dougherty B.A."/>
            <person name="Merrick J.M."/>
            <person name="McKenney K."/>
            <person name="Sutton G.G."/>
            <person name="FitzHugh W."/>
            <person name="Fields C.A."/>
            <person name="Gocayne J.D."/>
            <person name="Scott J.D."/>
            <person name="Shirley R."/>
            <person name="Liu L.-I."/>
            <person name="Glodek A."/>
            <person name="Kelley J.M."/>
            <person name="Weidman J.F."/>
            <person name="Phillips C.A."/>
            <person name="Spriggs T."/>
            <person name="Hedblom E."/>
            <person name="Cotton M.D."/>
            <person name="Utterback T.R."/>
            <person name="Hanna M.C."/>
            <person name="Nguyen D.T."/>
            <person name="Saudek D.M."/>
            <person name="Brandon R.C."/>
            <person name="Fine L.D."/>
            <person name="Fritchman J.L."/>
            <person name="Fuhrmann J.L."/>
            <person name="Geoghagen N.S.M."/>
            <person name="Gnehm C.L."/>
            <person name="McDonald L.A."/>
            <person name="Small K.V."/>
            <person name="Fraser C.M."/>
            <person name="Smith H.O."/>
            <person name="Venter J.C."/>
        </authorList>
    </citation>
    <scope>NUCLEOTIDE SEQUENCE [LARGE SCALE GENOMIC DNA]</scope>
    <source>
        <strain>ATCC 51907 / DSM 11121 / KW20 / Rd</strain>
    </source>
</reference>
<protein>
    <recommendedName>
        <fullName>Uncharacterized protein HI_1386</fullName>
    </recommendedName>
</protein>
<proteinExistence type="predicted"/>
<keyword id="KW-1185">Reference proteome</keyword>
<accession>P44171</accession>
<gene>
    <name type="ordered locus">HI_1386</name>
</gene>